<accession>Q9ET55</accession>
<accession>G3V7F4</accession>
<reference key="1">
    <citation type="journal article" date="2004" name="Nature">
        <title>Genome sequence of the Brown Norway rat yields insights into mammalian evolution.</title>
        <authorList>
            <person name="Gibbs R.A."/>
            <person name="Weinstock G.M."/>
            <person name="Metzker M.L."/>
            <person name="Muzny D.M."/>
            <person name="Sodergren E.J."/>
            <person name="Scherer S."/>
            <person name="Scott G."/>
            <person name="Steffen D."/>
            <person name="Worley K.C."/>
            <person name="Burch P.E."/>
            <person name="Okwuonu G."/>
            <person name="Hines S."/>
            <person name="Lewis L."/>
            <person name="Deramo C."/>
            <person name="Delgado O."/>
            <person name="Dugan-Rocha S."/>
            <person name="Miner G."/>
            <person name="Morgan M."/>
            <person name="Hawes A."/>
            <person name="Gill R."/>
            <person name="Holt R.A."/>
            <person name="Adams M.D."/>
            <person name="Amanatides P.G."/>
            <person name="Baden-Tillson H."/>
            <person name="Barnstead M."/>
            <person name="Chin S."/>
            <person name="Evans C.A."/>
            <person name="Ferriera S."/>
            <person name="Fosler C."/>
            <person name="Glodek A."/>
            <person name="Gu Z."/>
            <person name="Jennings D."/>
            <person name="Kraft C.L."/>
            <person name="Nguyen T."/>
            <person name="Pfannkoch C.M."/>
            <person name="Sitter C."/>
            <person name="Sutton G.G."/>
            <person name="Venter J.C."/>
            <person name="Woodage T."/>
            <person name="Smith D."/>
            <person name="Lee H.-M."/>
            <person name="Gustafson E."/>
            <person name="Cahill P."/>
            <person name="Kana A."/>
            <person name="Doucette-Stamm L."/>
            <person name="Weinstock K."/>
            <person name="Fechtel K."/>
            <person name="Weiss R.B."/>
            <person name="Dunn D.M."/>
            <person name="Green E.D."/>
            <person name="Blakesley R.W."/>
            <person name="Bouffard G.G."/>
            <person name="De Jong P.J."/>
            <person name="Osoegawa K."/>
            <person name="Zhu B."/>
            <person name="Marra M."/>
            <person name="Schein J."/>
            <person name="Bosdet I."/>
            <person name="Fjell C."/>
            <person name="Jones S."/>
            <person name="Krzywinski M."/>
            <person name="Mathewson C."/>
            <person name="Siddiqui A."/>
            <person name="Wye N."/>
            <person name="McPherson J."/>
            <person name="Zhao S."/>
            <person name="Fraser C.M."/>
            <person name="Shetty J."/>
            <person name="Shatsman S."/>
            <person name="Geer K."/>
            <person name="Chen Y."/>
            <person name="Abramzon S."/>
            <person name="Nierman W.C."/>
            <person name="Havlak P.H."/>
            <person name="Chen R."/>
            <person name="Durbin K.J."/>
            <person name="Egan A."/>
            <person name="Ren Y."/>
            <person name="Song X.-Z."/>
            <person name="Li B."/>
            <person name="Liu Y."/>
            <person name="Qin X."/>
            <person name="Cawley S."/>
            <person name="Cooney A.J."/>
            <person name="D'Souza L.M."/>
            <person name="Martin K."/>
            <person name="Wu J.Q."/>
            <person name="Gonzalez-Garay M.L."/>
            <person name="Jackson A.R."/>
            <person name="Kalafus K.J."/>
            <person name="McLeod M.P."/>
            <person name="Milosavljevic A."/>
            <person name="Virk D."/>
            <person name="Volkov A."/>
            <person name="Wheeler D.A."/>
            <person name="Zhang Z."/>
            <person name="Bailey J.A."/>
            <person name="Eichler E.E."/>
            <person name="Tuzun E."/>
            <person name="Birney E."/>
            <person name="Mongin E."/>
            <person name="Ureta-Vidal A."/>
            <person name="Woodwark C."/>
            <person name="Zdobnov E."/>
            <person name="Bork P."/>
            <person name="Suyama M."/>
            <person name="Torrents D."/>
            <person name="Alexandersson M."/>
            <person name="Trask B.J."/>
            <person name="Young J.M."/>
            <person name="Huang H."/>
            <person name="Wang H."/>
            <person name="Xing H."/>
            <person name="Daniels S."/>
            <person name="Gietzen D."/>
            <person name="Schmidt J."/>
            <person name="Stevens K."/>
            <person name="Vitt U."/>
            <person name="Wingrove J."/>
            <person name="Camara F."/>
            <person name="Mar Alba M."/>
            <person name="Abril J.F."/>
            <person name="Guigo R."/>
            <person name="Smit A."/>
            <person name="Dubchak I."/>
            <person name="Rubin E.M."/>
            <person name="Couronne O."/>
            <person name="Poliakov A."/>
            <person name="Huebner N."/>
            <person name="Ganten D."/>
            <person name="Goesele C."/>
            <person name="Hummel O."/>
            <person name="Kreitler T."/>
            <person name="Lee Y.-A."/>
            <person name="Monti J."/>
            <person name="Schulz H."/>
            <person name="Zimdahl H."/>
            <person name="Himmelbauer H."/>
            <person name="Lehrach H."/>
            <person name="Jacob H.J."/>
            <person name="Bromberg S."/>
            <person name="Gullings-Handley J."/>
            <person name="Jensen-Seaman M.I."/>
            <person name="Kwitek A.E."/>
            <person name="Lazar J."/>
            <person name="Pasko D."/>
            <person name="Tonellato P.J."/>
            <person name="Twigger S."/>
            <person name="Ponting C.P."/>
            <person name="Duarte J.M."/>
            <person name="Rice S."/>
            <person name="Goodstadt L."/>
            <person name="Beatson S.A."/>
            <person name="Emes R.D."/>
            <person name="Winter E.E."/>
            <person name="Webber C."/>
            <person name="Brandt P."/>
            <person name="Nyakatura G."/>
            <person name="Adetobi M."/>
            <person name="Chiaromonte F."/>
            <person name="Elnitski L."/>
            <person name="Eswara P."/>
            <person name="Hardison R.C."/>
            <person name="Hou M."/>
            <person name="Kolbe D."/>
            <person name="Makova K."/>
            <person name="Miller W."/>
            <person name="Nekrutenko A."/>
            <person name="Riemer C."/>
            <person name="Schwartz S."/>
            <person name="Taylor J."/>
            <person name="Yang S."/>
            <person name="Zhang Y."/>
            <person name="Lindpaintner K."/>
            <person name="Andrews T.D."/>
            <person name="Caccamo M."/>
            <person name="Clamp M."/>
            <person name="Clarke L."/>
            <person name="Curwen V."/>
            <person name="Durbin R.M."/>
            <person name="Eyras E."/>
            <person name="Searle S.M."/>
            <person name="Cooper G.M."/>
            <person name="Batzoglou S."/>
            <person name="Brudno M."/>
            <person name="Sidow A."/>
            <person name="Stone E.A."/>
            <person name="Payseur B.A."/>
            <person name="Bourque G."/>
            <person name="Lopez-Otin C."/>
            <person name="Puente X.S."/>
            <person name="Chakrabarti K."/>
            <person name="Chatterji S."/>
            <person name="Dewey C."/>
            <person name="Pachter L."/>
            <person name="Bray N."/>
            <person name="Yap V.B."/>
            <person name="Caspi A."/>
            <person name="Tesler G."/>
            <person name="Pevzner P.A."/>
            <person name="Haussler D."/>
            <person name="Roskin K.M."/>
            <person name="Baertsch R."/>
            <person name="Clawson H."/>
            <person name="Furey T.S."/>
            <person name="Hinrichs A.S."/>
            <person name="Karolchik D."/>
            <person name="Kent W.J."/>
            <person name="Rosenbloom K.R."/>
            <person name="Trumbower H."/>
            <person name="Weirauch M."/>
            <person name="Cooper D.N."/>
            <person name="Stenson P.D."/>
            <person name="Ma B."/>
            <person name="Brent M."/>
            <person name="Arumugam M."/>
            <person name="Shteynberg D."/>
            <person name="Copley R.R."/>
            <person name="Taylor M.S."/>
            <person name="Riethman H."/>
            <person name="Mudunuri U."/>
            <person name="Peterson J."/>
            <person name="Guyer M."/>
            <person name="Felsenfeld A."/>
            <person name="Old S."/>
            <person name="Mockrin S."/>
            <person name="Collins F.S."/>
        </authorList>
    </citation>
    <scope>NUCLEOTIDE SEQUENCE [LARGE SCALE GENOMIC DNA]</scope>
    <source>
        <strain>Brown Norway</strain>
    </source>
</reference>
<reference key="2">
    <citation type="submission" date="2005-09" db="EMBL/GenBank/DDBJ databases">
        <authorList>
            <person name="Mural R.J."/>
            <person name="Li P.W."/>
            <person name="Adams M.D."/>
            <person name="Amanatides P.G."/>
            <person name="Baden-Tillson H."/>
            <person name="Barnstead M."/>
            <person name="Chin S.H."/>
            <person name="Dew I."/>
            <person name="Evans C.A."/>
            <person name="Ferriera S."/>
            <person name="Flanigan M."/>
            <person name="Fosler C."/>
            <person name="Glodek A."/>
            <person name="Gu Z."/>
            <person name="Holt R.A."/>
            <person name="Jennings D."/>
            <person name="Kraft C.L."/>
            <person name="Lu F."/>
            <person name="Nguyen T."/>
            <person name="Nusskern D.R."/>
            <person name="Pfannkoch C.M."/>
            <person name="Sitter C."/>
            <person name="Sutton G.G."/>
            <person name="Venter J.C."/>
            <person name="Wang Z."/>
            <person name="Woodage T."/>
            <person name="Zheng X.H."/>
            <person name="Zhong F."/>
        </authorList>
    </citation>
    <scope>NUCLEOTIDE SEQUENCE [LARGE SCALE GENOMIC DNA]</scope>
    <source>
        <strain>Brown Norway</strain>
    </source>
</reference>
<reference key="3">
    <citation type="submission" date="1999-10" db="EMBL/GenBank/DDBJ databases">
        <title>Mammalian homologs of Xenopus nocturnin: conservation of structure and circadian regulation.</title>
        <authorList>
            <person name="Wang Y."/>
            <person name="Osterbur D.L."/>
            <person name="Green C.B."/>
            <person name="Besharse J.C."/>
        </authorList>
    </citation>
    <scope>NUCLEOTIDE SEQUENCE [MRNA] OF 74-326</scope>
    <source>
        <tissue>Retina</tissue>
    </source>
</reference>
<keyword id="KW-0090">Biological rhythms</keyword>
<keyword id="KW-0963">Cytoplasm</keyword>
<keyword id="KW-0378">Hydrolase</keyword>
<keyword id="KW-0460">Magnesium</keyword>
<keyword id="KW-0479">Metal-binding</keyword>
<keyword id="KW-0496">Mitochondrion</keyword>
<keyword id="KW-0539">Nucleus</keyword>
<keyword id="KW-1185">Reference proteome</keyword>
<keyword id="KW-0678">Repressor</keyword>
<keyword id="KW-0694">RNA-binding</keyword>
<keyword id="KW-0809">Transit peptide</keyword>
<organism>
    <name type="scientific">Rattus norvegicus</name>
    <name type="common">Rat</name>
    <dbReference type="NCBI Taxonomy" id="10116"/>
    <lineage>
        <taxon>Eukaryota</taxon>
        <taxon>Metazoa</taxon>
        <taxon>Chordata</taxon>
        <taxon>Craniata</taxon>
        <taxon>Vertebrata</taxon>
        <taxon>Euteleostomi</taxon>
        <taxon>Mammalia</taxon>
        <taxon>Eutheria</taxon>
        <taxon>Euarchontoglires</taxon>
        <taxon>Glires</taxon>
        <taxon>Rodentia</taxon>
        <taxon>Myomorpha</taxon>
        <taxon>Muroidea</taxon>
        <taxon>Muridae</taxon>
        <taxon>Murinae</taxon>
        <taxon>Rattus</taxon>
    </lineage>
</organism>
<name>NOCT_RAT</name>
<feature type="transit peptide" description="Mitochondrion" evidence="3">
    <location>
        <begin position="1"/>
        <end position="72"/>
    </location>
</feature>
<feature type="chain" id="PRO_0000424685" description="Nocturnin" evidence="3">
    <location>
        <begin position="73"/>
        <end position="428"/>
    </location>
</feature>
<feature type="region of interest" description="Disordered" evidence="4">
    <location>
        <begin position="21"/>
        <end position="66"/>
    </location>
</feature>
<feature type="region of interest" description="Interaction with PPARG" evidence="1">
    <location>
        <begin position="340"/>
        <end position="350"/>
    </location>
</feature>
<feature type="compositionally biased region" description="Low complexity" evidence="4">
    <location>
        <begin position="39"/>
        <end position="55"/>
    </location>
</feature>
<feature type="binding site" evidence="2">
    <location>
        <position position="192"/>
    </location>
    <ligand>
        <name>Mg(2+)</name>
        <dbReference type="ChEBI" id="CHEBI:18420"/>
    </ligand>
</feature>
<feature type="binding site" evidence="2">
    <location>
        <position position="192"/>
    </location>
    <ligand>
        <name>substrate</name>
    </ligand>
</feature>
<feature type="binding site" evidence="2">
    <location>
        <begin position="216"/>
        <end position="218"/>
    </location>
    <ligand>
        <name>substrate</name>
    </ligand>
</feature>
<feature type="binding site" evidence="2">
    <location>
        <position position="260"/>
    </location>
    <ligand>
        <name>substrate</name>
    </ligand>
</feature>
<feature type="binding site" evidence="2">
    <location>
        <begin position="283"/>
        <end position="286"/>
    </location>
    <ligand>
        <name>substrate</name>
    </ligand>
</feature>
<feature type="binding site" evidence="2">
    <location>
        <begin position="321"/>
        <end position="323"/>
    </location>
    <ligand>
        <name>substrate</name>
    </ligand>
</feature>
<feature type="binding site" evidence="2">
    <location>
        <position position="411"/>
    </location>
    <ligand>
        <name>substrate</name>
    </ligand>
</feature>
<feature type="sequence conflict" description="In Ref. 3; AAG01390." evidence="5" ref="3">
    <original>A</original>
    <variation>P</variation>
    <location>
        <position position="94"/>
    </location>
</feature>
<feature type="sequence conflict" description="In Ref. 3; AAG01390." evidence="5" ref="3">
    <original>F</original>
    <variation>L</variation>
    <location>
        <position position="200"/>
    </location>
</feature>
<feature type="sequence conflict" description="In Ref. 3; AAG01390." evidence="5" ref="3">
    <original>N</original>
    <variation>S</variation>
    <location>
        <position position="304"/>
    </location>
</feature>
<comment type="function">
    <text evidence="1 2">Phosphatase which catalyzes the conversion of NADP(+) to NAD(+) and of NADPH to NADH (By similarity). Shows a small preference for NADPH over NADP(+) (By similarity). Represses translation and promotes degradation of target mRNA molecules (By similarity). Plays an important role in post-transcriptional regulation of metabolic genes under circadian control (By similarity). Exerts a rhythmic post-transcriptional control of genes necessary for metabolic functions including nutrient absorption, glucose/insulin sensitivity, lipid metabolism, adipogenesis, inflammation and osteogenesis (By similarity). Plays an important role in favoring adipogenesis over osteoblastogenesis and acts as a key regulator of the adipogenesis/osteogenesis balance (By similarity). Promotes adipogenesis by facilitating PPARG nuclear translocation which activates its transcriptional activity (By similarity). Regulates circadian expression of NOS2 in the liver and negatively regulates the circadian expression of IGF1 in the bone (By similarity). Critical for proper development of early embryos (By similarity).</text>
</comment>
<comment type="catalytic activity">
    <reaction evidence="2">
        <text>NADP(+) + H2O = phosphate + NAD(+)</text>
        <dbReference type="Rhea" id="RHEA:28050"/>
        <dbReference type="ChEBI" id="CHEBI:15377"/>
        <dbReference type="ChEBI" id="CHEBI:43474"/>
        <dbReference type="ChEBI" id="CHEBI:57540"/>
        <dbReference type="ChEBI" id="CHEBI:58349"/>
        <dbReference type="EC" id="3.1.3.108"/>
    </reaction>
    <physiologicalReaction direction="left-to-right" evidence="2">
        <dbReference type="Rhea" id="RHEA:28051"/>
    </physiologicalReaction>
</comment>
<comment type="catalytic activity">
    <reaction evidence="2">
        <text>NADPH + H2O = phosphate + NADH</text>
        <dbReference type="Rhea" id="RHEA:60664"/>
        <dbReference type="ChEBI" id="CHEBI:15377"/>
        <dbReference type="ChEBI" id="CHEBI:43474"/>
        <dbReference type="ChEBI" id="CHEBI:57783"/>
        <dbReference type="ChEBI" id="CHEBI:57945"/>
        <dbReference type="EC" id="3.1.3.108"/>
    </reaction>
    <physiologicalReaction direction="left-to-right" evidence="2">
        <dbReference type="Rhea" id="RHEA:60665"/>
    </physiologicalReaction>
</comment>
<comment type="cofactor">
    <cofactor evidence="2">
        <name>Mg(2+)</name>
        <dbReference type="ChEBI" id="CHEBI:18420"/>
    </cofactor>
    <text evidence="2">Binds 2 magnesium ions, but the ions are only loosely bound to the protein.</text>
</comment>
<comment type="subunit">
    <text evidence="1">Interacts with PPARG.</text>
</comment>
<comment type="subcellular location">
    <subcellularLocation>
        <location evidence="1">Cytoplasm</location>
    </subcellularLocation>
    <subcellularLocation>
        <location evidence="1">Nucleus</location>
    </subcellularLocation>
    <subcellularLocation>
        <location evidence="1">Cytoplasm</location>
        <location evidence="1">Perinuclear region</location>
    </subcellularLocation>
    <subcellularLocation>
        <location evidence="2">Mitochondrion</location>
    </subcellularLocation>
</comment>
<comment type="similarity">
    <text evidence="5">Belongs to the CCR4/nocturin family.</text>
</comment>
<comment type="caution">
    <text evidence="1 2">Was initially shown to have low deadenylase activity that was lost when the metal-binding Glu was mutated (By similarity). Later studies showed that the purified protein lacked deadenylase activity (By similarity). Was subsequently shown to act as a phosphatase (By similarity).</text>
</comment>
<evidence type="ECO:0000250" key="1">
    <source>
        <dbReference type="UniProtKB" id="O35710"/>
    </source>
</evidence>
<evidence type="ECO:0000250" key="2">
    <source>
        <dbReference type="UniProtKB" id="Q9UK39"/>
    </source>
</evidence>
<evidence type="ECO:0000255" key="3"/>
<evidence type="ECO:0000256" key="4">
    <source>
        <dbReference type="SAM" id="MobiDB-lite"/>
    </source>
</evidence>
<evidence type="ECO:0000305" key="5"/>
<evidence type="ECO:0000312" key="6">
    <source>
        <dbReference type="RGD" id="1587344"/>
    </source>
</evidence>
<protein>
    <recommendedName>
        <fullName evidence="6">Nocturnin</fullName>
        <ecNumber evidence="2">3.1.3.108</ecNumber>
    </recommendedName>
    <alternativeName>
        <fullName>Carbon catabolite repression 4-like protein</fullName>
    </alternativeName>
</protein>
<proteinExistence type="evidence at transcript level"/>
<gene>
    <name evidence="6" type="primary">Noct</name>
    <name type="synonym">Ccr4</name>
    <name type="synonym">Ccrn4l</name>
    <name type="synonym">Noc</name>
</gene>
<dbReference type="EC" id="3.1.3.108" evidence="2"/>
<dbReference type="EMBL" id="AABR06016602">
    <property type="status" value="NOT_ANNOTATED_CDS"/>
    <property type="molecule type" value="Genomic_DNA"/>
</dbReference>
<dbReference type="EMBL" id="CH474003">
    <property type="protein sequence ID" value="EDM15000.1"/>
    <property type="molecule type" value="Genomic_DNA"/>
</dbReference>
<dbReference type="EMBL" id="AF199495">
    <property type="protein sequence ID" value="AAG01390.1"/>
    <property type="molecule type" value="mRNA"/>
</dbReference>
<dbReference type="RefSeq" id="NP_612535.1">
    <property type="nucleotide sequence ID" value="NM_138526.1"/>
</dbReference>
<dbReference type="SMR" id="Q9ET55"/>
<dbReference type="FunCoup" id="Q9ET55">
    <property type="interactions" value="467"/>
</dbReference>
<dbReference type="STRING" id="10116.ENSRNOP00000014348"/>
<dbReference type="PhosphoSitePlus" id="Q9ET55"/>
<dbReference type="PaxDb" id="10116-ENSRNOP00000014348"/>
<dbReference type="Ensembl" id="ENSRNOT00000014348.6">
    <property type="protein sequence ID" value="ENSRNOP00000014348.5"/>
    <property type="gene ID" value="ENSRNOG00000010799.6"/>
</dbReference>
<dbReference type="GeneID" id="310395"/>
<dbReference type="KEGG" id="rno:310395"/>
<dbReference type="UCSC" id="RGD:1587344">
    <property type="organism name" value="rat"/>
</dbReference>
<dbReference type="AGR" id="RGD:1587344"/>
<dbReference type="CTD" id="25819"/>
<dbReference type="RGD" id="1587344">
    <property type="gene designation" value="Noct"/>
</dbReference>
<dbReference type="eggNOG" id="KOG0620">
    <property type="taxonomic scope" value="Eukaryota"/>
</dbReference>
<dbReference type="GeneTree" id="ENSGT00940000155249"/>
<dbReference type="HOGENOM" id="CLU_016428_1_2_1"/>
<dbReference type="InParanoid" id="Q9ET55"/>
<dbReference type="OMA" id="RAACSMG"/>
<dbReference type="OrthoDB" id="276515at2759"/>
<dbReference type="TreeFam" id="TF323175"/>
<dbReference type="PRO" id="PR:Q9ET55"/>
<dbReference type="Proteomes" id="UP000002494">
    <property type="component" value="Chromosome 2"/>
</dbReference>
<dbReference type="Proteomes" id="UP000234681">
    <property type="component" value="Chromosome 2"/>
</dbReference>
<dbReference type="Bgee" id="ENSRNOG00000010799">
    <property type="expression patterns" value="Expressed in quadriceps femoris and 20 other cell types or tissues"/>
</dbReference>
<dbReference type="GO" id="GO:0005737">
    <property type="term" value="C:cytoplasm"/>
    <property type="evidence" value="ECO:0000250"/>
    <property type="project" value="UniProtKB"/>
</dbReference>
<dbReference type="GO" id="GO:0005739">
    <property type="term" value="C:mitochondrion"/>
    <property type="evidence" value="ECO:0000250"/>
    <property type="project" value="UniProtKB"/>
</dbReference>
<dbReference type="GO" id="GO:0005634">
    <property type="term" value="C:nucleus"/>
    <property type="evidence" value="ECO:0000250"/>
    <property type="project" value="UniProtKB"/>
</dbReference>
<dbReference type="GO" id="GO:0000932">
    <property type="term" value="C:P-body"/>
    <property type="evidence" value="ECO:0000266"/>
    <property type="project" value="RGD"/>
</dbReference>
<dbReference type="GO" id="GO:0048471">
    <property type="term" value="C:perinuclear region of cytoplasm"/>
    <property type="evidence" value="ECO:0000250"/>
    <property type="project" value="UniProtKB"/>
</dbReference>
<dbReference type="GO" id="GO:0000175">
    <property type="term" value="F:3'-5'-RNA exonuclease activity"/>
    <property type="evidence" value="ECO:0000318"/>
    <property type="project" value="GO_Central"/>
</dbReference>
<dbReference type="GO" id="GO:0046872">
    <property type="term" value="F:metal ion binding"/>
    <property type="evidence" value="ECO:0007669"/>
    <property type="project" value="UniProtKB-KW"/>
</dbReference>
<dbReference type="GO" id="GO:0003729">
    <property type="term" value="F:mRNA binding"/>
    <property type="evidence" value="ECO:0000250"/>
    <property type="project" value="UniProtKB"/>
</dbReference>
<dbReference type="GO" id="GO:0019178">
    <property type="term" value="F:NADP phosphatase activity"/>
    <property type="evidence" value="ECO:0000250"/>
    <property type="project" value="UniProtKB"/>
</dbReference>
<dbReference type="GO" id="GO:0102757">
    <property type="term" value="F:NADPH phosphatase activity"/>
    <property type="evidence" value="ECO:0000250"/>
    <property type="project" value="UniProtKB"/>
</dbReference>
<dbReference type="GO" id="GO:0004535">
    <property type="term" value="F:poly(A)-specific ribonuclease activity"/>
    <property type="evidence" value="ECO:0000250"/>
    <property type="project" value="UniProtKB"/>
</dbReference>
<dbReference type="GO" id="GO:0032922">
    <property type="term" value="P:circadian regulation of gene expression"/>
    <property type="evidence" value="ECO:0000250"/>
    <property type="project" value="UniProtKB"/>
</dbReference>
<dbReference type="GO" id="GO:0007623">
    <property type="term" value="P:circadian rhythm"/>
    <property type="evidence" value="ECO:0000266"/>
    <property type="project" value="RGD"/>
</dbReference>
<dbReference type="GO" id="GO:0000290">
    <property type="term" value="P:deadenylation-dependent decapping of nuclear-transcribed mRNA"/>
    <property type="evidence" value="ECO:0000266"/>
    <property type="project" value="RGD"/>
</dbReference>
<dbReference type="GO" id="GO:0048255">
    <property type="term" value="P:mRNA stabilization"/>
    <property type="evidence" value="ECO:0000250"/>
    <property type="project" value="UniProtKB"/>
</dbReference>
<dbReference type="GO" id="GO:0006739">
    <property type="term" value="P:NADP metabolic process"/>
    <property type="evidence" value="ECO:0000250"/>
    <property type="project" value="UniProtKB"/>
</dbReference>
<dbReference type="GO" id="GO:0010629">
    <property type="term" value="P:negative regulation of gene expression"/>
    <property type="evidence" value="ECO:0000250"/>
    <property type="project" value="UniProtKB"/>
</dbReference>
<dbReference type="GO" id="GO:0045668">
    <property type="term" value="P:negative regulation of osteoblast differentiation"/>
    <property type="evidence" value="ECO:0000250"/>
    <property type="project" value="UniProtKB"/>
</dbReference>
<dbReference type="GO" id="GO:0033962">
    <property type="term" value="P:P-body assembly"/>
    <property type="evidence" value="ECO:0000266"/>
    <property type="project" value="RGD"/>
</dbReference>
<dbReference type="GO" id="GO:0045600">
    <property type="term" value="P:positive regulation of fat cell differentiation"/>
    <property type="evidence" value="ECO:0000250"/>
    <property type="project" value="UniProtKB"/>
</dbReference>
<dbReference type="GO" id="GO:0042752">
    <property type="term" value="P:regulation of circadian rhythm"/>
    <property type="evidence" value="ECO:0000250"/>
    <property type="project" value="UniProtKB"/>
</dbReference>
<dbReference type="GO" id="GO:0045995">
    <property type="term" value="P:regulation of embryonic development"/>
    <property type="evidence" value="ECO:0000250"/>
    <property type="project" value="UniProtKB"/>
</dbReference>
<dbReference type="GO" id="GO:0032496">
    <property type="term" value="P:response to lipopolysaccharide"/>
    <property type="evidence" value="ECO:0000250"/>
    <property type="project" value="UniProtKB"/>
</dbReference>
<dbReference type="CDD" id="cd09096">
    <property type="entry name" value="Deadenylase_nocturnin"/>
    <property type="match status" value="1"/>
</dbReference>
<dbReference type="FunFam" id="3.60.10.10:FF:000012">
    <property type="entry name" value="nocturnin isoform X2"/>
    <property type="match status" value="1"/>
</dbReference>
<dbReference type="Gene3D" id="3.60.10.10">
    <property type="entry name" value="Endonuclease/exonuclease/phosphatase"/>
    <property type="match status" value="1"/>
</dbReference>
<dbReference type="InterPro" id="IPR050410">
    <property type="entry name" value="CCR4/nocturin_mRNA_transcr"/>
</dbReference>
<dbReference type="InterPro" id="IPR034965">
    <property type="entry name" value="Deadenylase_nocturnin"/>
</dbReference>
<dbReference type="InterPro" id="IPR036691">
    <property type="entry name" value="Endo/exonu/phosph_ase_sf"/>
</dbReference>
<dbReference type="InterPro" id="IPR005135">
    <property type="entry name" value="Endo/exonuclease/phosphatase"/>
</dbReference>
<dbReference type="PANTHER" id="PTHR12121">
    <property type="entry name" value="CARBON CATABOLITE REPRESSOR PROTEIN 4"/>
    <property type="match status" value="1"/>
</dbReference>
<dbReference type="PANTHER" id="PTHR12121:SF45">
    <property type="entry name" value="NOCTURNIN"/>
    <property type="match status" value="1"/>
</dbReference>
<dbReference type="Pfam" id="PF03372">
    <property type="entry name" value="Exo_endo_phos"/>
    <property type="match status" value="1"/>
</dbReference>
<dbReference type="SUPFAM" id="SSF56219">
    <property type="entry name" value="DNase I-like"/>
    <property type="match status" value="1"/>
</dbReference>
<sequence>MYQSPRRLCSALLLRDAPGLRRTLVPGPRRTLAPPVLGSRPASPQLQAAASGAARSRPRTVSPMGNGTSRLYSALAKTINSSAAAQHPEYLVSADPEHLEPIDPKELLEECRAVLHTRPPRYQRDFVDLRTDCSSSHPPIRVMQWNILAQALGEGKDNFVQCPVEALKWEERKCLILEEILAYQPDILCLQEVDHYFDTFQPLLSRLGYQGTFFPKPWSPCLDVEHNNGPDGCALFFLQSRFKLINSTNIRLTAMTLKTNQVAIAQTLECKESGRQFCIAVTHLKARTGWERFRSAQGCDLLQNLQNITEGAKIPLIVCGDFNAEPTEEVYKHFASSSLNLNSAYKLLSPDGQSEPPYTTWKIRTSGECRHTLDYIWYSRHALSVTSALDLLTEEQIGPNRLPSFHYPSDHLSLVCDFSFNEEPDELL</sequence>